<comment type="function">
    <text evidence="1">The plasma membrane ATPase of plants and fungi is a hydrogen ion pump. The proton gradient it generates drives the active transport of nutrients by H(+)-symport. The resulting external acidification and/or internal alkinization may mediate growth responses (By similarity).</text>
</comment>
<comment type="catalytic activity">
    <reaction>
        <text>ATP + H2O + H(+)(in) = ADP + phosphate + 2 H(+)(out)</text>
        <dbReference type="Rhea" id="RHEA:20852"/>
        <dbReference type="ChEBI" id="CHEBI:15377"/>
        <dbReference type="ChEBI" id="CHEBI:15378"/>
        <dbReference type="ChEBI" id="CHEBI:30616"/>
        <dbReference type="ChEBI" id="CHEBI:43474"/>
        <dbReference type="ChEBI" id="CHEBI:456216"/>
        <dbReference type="EC" id="7.1.2.1"/>
    </reaction>
</comment>
<comment type="subcellular location">
    <subcellularLocation>
        <location>Cell membrane</location>
        <topology>Multi-pass membrane protein</topology>
    </subcellularLocation>
</comment>
<comment type="similarity">
    <text evidence="3">Belongs to the cation transport ATPase (P-type) (TC 3.A.3) family. Type IIIA subfamily.</text>
</comment>
<comment type="sequence caution" evidence="3">
    <conflict type="erroneous initiation">
        <sequence resource="EMBL-CDS" id="BAG94605"/>
    </conflict>
</comment>
<comment type="sequence caution" evidence="3">
    <conflict type="erroneous gene model prediction">
        <sequence resource="EMBL-CDS" id="CAD29313"/>
    </conflict>
</comment>
<protein>
    <recommendedName>
        <fullName>Plasma membrane ATPase</fullName>
        <ecNumber>7.1.2.1</ecNumber>
    </recommendedName>
    <alternativeName>
        <fullName>Proton pump</fullName>
    </alternativeName>
</protein>
<dbReference type="EC" id="7.1.2.1"/>
<dbReference type="EMBL" id="AJ440218">
    <property type="protein sequence ID" value="CAD29313.1"/>
    <property type="status" value="ALT_SEQ"/>
    <property type="molecule type" value="Genomic_DNA"/>
</dbReference>
<dbReference type="EMBL" id="AL606685">
    <property type="protein sequence ID" value="CAE03410.3"/>
    <property type="molecule type" value="Genomic_DNA"/>
</dbReference>
<dbReference type="EMBL" id="AP008210">
    <property type="protein sequence ID" value="BAF16032.1"/>
    <property type="molecule type" value="Genomic_DNA"/>
</dbReference>
<dbReference type="EMBL" id="AP014960">
    <property type="protein sequence ID" value="BAS91406.1"/>
    <property type="molecule type" value="Genomic_DNA"/>
</dbReference>
<dbReference type="EMBL" id="AK100435">
    <property type="protein sequence ID" value="BAG94605.1"/>
    <property type="status" value="ALT_INIT"/>
    <property type="molecule type" value="mRNA"/>
</dbReference>
<dbReference type="RefSeq" id="XP_015635425.1">
    <property type="nucleotide sequence ID" value="XM_015779939.1"/>
</dbReference>
<dbReference type="SMR" id="Q7XPY2"/>
<dbReference type="FunCoup" id="Q7XPY2">
    <property type="interactions" value="959"/>
</dbReference>
<dbReference type="STRING" id="39947.Q7XPY2"/>
<dbReference type="CarbonylDB" id="Q7XPY2"/>
<dbReference type="PaxDb" id="39947-Q7XPY2"/>
<dbReference type="EnsemblPlants" id="Os04t0656100-01">
    <property type="protein sequence ID" value="Os04t0656100-01"/>
    <property type="gene ID" value="Os04g0656100"/>
</dbReference>
<dbReference type="Gramene" id="Os04t0656100-01">
    <property type="protein sequence ID" value="Os04t0656100-01"/>
    <property type="gene ID" value="Os04g0656100"/>
</dbReference>
<dbReference type="KEGG" id="dosa:Os04g0656100"/>
<dbReference type="eggNOG" id="KOG0205">
    <property type="taxonomic scope" value="Eukaryota"/>
</dbReference>
<dbReference type="HOGENOM" id="CLU_002360_6_4_1"/>
<dbReference type="InParanoid" id="Q7XPY2"/>
<dbReference type="OMA" id="FAYQFDF"/>
<dbReference type="OrthoDB" id="116380at2759"/>
<dbReference type="Proteomes" id="UP000000763">
    <property type="component" value="Chromosome 4"/>
</dbReference>
<dbReference type="Proteomes" id="UP000059680">
    <property type="component" value="Chromosome 4"/>
</dbReference>
<dbReference type="ExpressionAtlas" id="Q7XPY2">
    <property type="expression patterns" value="baseline and differential"/>
</dbReference>
<dbReference type="GO" id="GO:0005886">
    <property type="term" value="C:plasma membrane"/>
    <property type="evidence" value="ECO:0000318"/>
    <property type="project" value="GO_Central"/>
</dbReference>
<dbReference type="GO" id="GO:0005524">
    <property type="term" value="F:ATP binding"/>
    <property type="evidence" value="ECO:0007669"/>
    <property type="project" value="UniProtKB-KW"/>
</dbReference>
<dbReference type="GO" id="GO:0016887">
    <property type="term" value="F:ATP hydrolysis activity"/>
    <property type="evidence" value="ECO:0007669"/>
    <property type="project" value="InterPro"/>
</dbReference>
<dbReference type="GO" id="GO:0046872">
    <property type="term" value="F:metal ion binding"/>
    <property type="evidence" value="ECO:0007669"/>
    <property type="project" value="UniProtKB-KW"/>
</dbReference>
<dbReference type="GO" id="GO:0008553">
    <property type="term" value="F:P-type proton-exporting transporter activity"/>
    <property type="evidence" value="ECO:0000318"/>
    <property type="project" value="GO_Central"/>
</dbReference>
<dbReference type="GO" id="GO:0120029">
    <property type="term" value="P:proton export across plasma membrane"/>
    <property type="evidence" value="ECO:0007669"/>
    <property type="project" value="InterPro"/>
</dbReference>
<dbReference type="GO" id="GO:1902600">
    <property type="term" value="P:proton transmembrane transport"/>
    <property type="evidence" value="ECO:0000318"/>
    <property type="project" value="GO_Central"/>
</dbReference>
<dbReference type="GO" id="GO:0051453">
    <property type="term" value="P:regulation of intracellular pH"/>
    <property type="evidence" value="ECO:0000318"/>
    <property type="project" value="GO_Central"/>
</dbReference>
<dbReference type="CDD" id="cd02076">
    <property type="entry name" value="P-type_ATPase_H"/>
    <property type="match status" value="1"/>
</dbReference>
<dbReference type="FunFam" id="1.20.1110.10:FF:000045">
    <property type="entry name" value="ATPase 4 plasma membrane-type"/>
    <property type="match status" value="1"/>
</dbReference>
<dbReference type="FunFam" id="2.70.150.10:FF:000004">
    <property type="entry name" value="Plasma membrane ATPase"/>
    <property type="match status" value="1"/>
</dbReference>
<dbReference type="FunFam" id="3.40.1110.10:FF:000004">
    <property type="entry name" value="Plasma membrane ATPase"/>
    <property type="match status" value="1"/>
</dbReference>
<dbReference type="FunFam" id="3.40.50.1000:FF:000211">
    <property type="entry name" value="Plasma membrane ATPase"/>
    <property type="match status" value="1"/>
</dbReference>
<dbReference type="Gene3D" id="6.10.140.890">
    <property type="match status" value="1"/>
</dbReference>
<dbReference type="Gene3D" id="3.40.1110.10">
    <property type="entry name" value="Calcium-transporting ATPase, cytoplasmic domain N"/>
    <property type="match status" value="1"/>
</dbReference>
<dbReference type="Gene3D" id="2.70.150.10">
    <property type="entry name" value="Calcium-transporting ATPase, cytoplasmic transduction domain A"/>
    <property type="match status" value="1"/>
</dbReference>
<dbReference type="Gene3D" id="1.20.1110.10">
    <property type="entry name" value="Calcium-transporting ATPase, transmembrane domain"/>
    <property type="match status" value="1"/>
</dbReference>
<dbReference type="Gene3D" id="3.40.50.1000">
    <property type="entry name" value="HAD superfamily/HAD-like"/>
    <property type="match status" value="1"/>
</dbReference>
<dbReference type="InterPro" id="IPR004014">
    <property type="entry name" value="ATPase_P-typ_cation-transptr_N"/>
</dbReference>
<dbReference type="InterPro" id="IPR023299">
    <property type="entry name" value="ATPase_P-typ_cyto_dom_N"/>
</dbReference>
<dbReference type="InterPro" id="IPR018303">
    <property type="entry name" value="ATPase_P-typ_P_site"/>
</dbReference>
<dbReference type="InterPro" id="IPR023298">
    <property type="entry name" value="ATPase_P-typ_TM_dom_sf"/>
</dbReference>
<dbReference type="InterPro" id="IPR008250">
    <property type="entry name" value="ATPase_P-typ_transduc_dom_A_sf"/>
</dbReference>
<dbReference type="InterPro" id="IPR036412">
    <property type="entry name" value="HAD-like_sf"/>
</dbReference>
<dbReference type="InterPro" id="IPR023214">
    <property type="entry name" value="HAD_sf"/>
</dbReference>
<dbReference type="InterPro" id="IPR006534">
    <property type="entry name" value="P-type_ATPase_IIIA"/>
</dbReference>
<dbReference type="InterPro" id="IPR001757">
    <property type="entry name" value="P_typ_ATPase"/>
</dbReference>
<dbReference type="InterPro" id="IPR044492">
    <property type="entry name" value="P_typ_ATPase_HD_dom"/>
</dbReference>
<dbReference type="NCBIfam" id="TIGR01647">
    <property type="entry name" value="ATPase-IIIA_H"/>
    <property type="match status" value="1"/>
</dbReference>
<dbReference type="NCBIfam" id="TIGR01494">
    <property type="entry name" value="ATPase_P-type"/>
    <property type="match status" value="2"/>
</dbReference>
<dbReference type="PANTHER" id="PTHR42861">
    <property type="entry name" value="CALCIUM-TRANSPORTING ATPASE"/>
    <property type="match status" value="1"/>
</dbReference>
<dbReference type="Pfam" id="PF00690">
    <property type="entry name" value="Cation_ATPase_N"/>
    <property type="match status" value="1"/>
</dbReference>
<dbReference type="Pfam" id="PF00122">
    <property type="entry name" value="E1-E2_ATPase"/>
    <property type="match status" value="1"/>
</dbReference>
<dbReference type="Pfam" id="PF00702">
    <property type="entry name" value="Hydrolase"/>
    <property type="match status" value="1"/>
</dbReference>
<dbReference type="PRINTS" id="PR00119">
    <property type="entry name" value="CATATPASE"/>
</dbReference>
<dbReference type="PRINTS" id="PR00120">
    <property type="entry name" value="HATPASE"/>
</dbReference>
<dbReference type="SFLD" id="SFLDS00003">
    <property type="entry name" value="Haloacid_Dehalogenase"/>
    <property type="match status" value="1"/>
</dbReference>
<dbReference type="SFLD" id="SFLDF00027">
    <property type="entry name" value="p-type_atpase"/>
    <property type="match status" value="1"/>
</dbReference>
<dbReference type="SMART" id="SM00831">
    <property type="entry name" value="Cation_ATPase_N"/>
    <property type="match status" value="1"/>
</dbReference>
<dbReference type="SUPFAM" id="SSF81653">
    <property type="entry name" value="Calcium ATPase, transduction domain A"/>
    <property type="match status" value="1"/>
</dbReference>
<dbReference type="SUPFAM" id="SSF81665">
    <property type="entry name" value="Calcium ATPase, transmembrane domain M"/>
    <property type="match status" value="1"/>
</dbReference>
<dbReference type="SUPFAM" id="SSF56784">
    <property type="entry name" value="HAD-like"/>
    <property type="match status" value="1"/>
</dbReference>
<dbReference type="PROSITE" id="PS00154">
    <property type="entry name" value="ATPASE_E1_E2"/>
    <property type="match status" value="1"/>
</dbReference>
<name>PMA1_ORYSJ</name>
<organism>
    <name type="scientific">Oryza sativa subsp. japonica</name>
    <name type="common">Rice</name>
    <dbReference type="NCBI Taxonomy" id="39947"/>
    <lineage>
        <taxon>Eukaryota</taxon>
        <taxon>Viridiplantae</taxon>
        <taxon>Streptophyta</taxon>
        <taxon>Embryophyta</taxon>
        <taxon>Tracheophyta</taxon>
        <taxon>Spermatophyta</taxon>
        <taxon>Magnoliopsida</taxon>
        <taxon>Liliopsida</taxon>
        <taxon>Poales</taxon>
        <taxon>Poaceae</taxon>
        <taxon>BOP clade</taxon>
        <taxon>Oryzoideae</taxon>
        <taxon>Oryzeae</taxon>
        <taxon>Oryzinae</taxon>
        <taxon>Oryza</taxon>
        <taxon>Oryza sativa</taxon>
    </lineage>
</organism>
<feature type="chain" id="PRO_0000247644" description="Plasma membrane ATPase">
    <location>
        <begin position="1"/>
        <end position="951"/>
    </location>
</feature>
<feature type="transmembrane region" description="Helical" evidence="2">
    <location>
        <begin position="61"/>
        <end position="81"/>
    </location>
</feature>
<feature type="transmembrane region" description="Helical" evidence="2">
    <location>
        <begin position="93"/>
        <end position="113"/>
    </location>
</feature>
<feature type="transmembrane region" description="Helical" evidence="2">
    <location>
        <begin position="243"/>
        <end position="263"/>
    </location>
</feature>
<feature type="transmembrane region" description="Helical" evidence="2">
    <location>
        <begin position="277"/>
        <end position="297"/>
    </location>
</feature>
<feature type="transmembrane region" description="Helical" evidence="2">
    <location>
        <begin position="647"/>
        <end position="667"/>
    </location>
</feature>
<feature type="transmembrane region" description="Helical" evidence="2">
    <location>
        <begin position="671"/>
        <end position="691"/>
    </location>
</feature>
<feature type="transmembrane region" description="Helical" evidence="2">
    <location>
        <begin position="709"/>
        <end position="729"/>
    </location>
</feature>
<feature type="transmembrane region" description="Helical" evidence="2">
    <location>
        <begin position="752"/>
        <end position="772"/>
    </location>
</feature>
<feature type="transmembrane region" description="Helical" evidence="2">
    <location>
        <begin position="785"/>
        <end position="805"/>
    </location>
</feature>
<feature type="transmembrane region" description="Helical" evidence="2">
    <location>
        <begin position="814"/>
        <end position="834"/>
    </location>
</feature>
<feature type="active site" description="4-aspartylphosphate intermediate" evidence="1">
    <location>
        <position position="329"/>
    </location>
</feature>
<feature type="binding site" evidence="1">
    <location>
        <position position="588"/>
    </location>
    <ligand>
        <name>Mg(2+)</name>
        <dbReference type="ChEBI" id="CHEBI:18420"/>
    </ligand>
</feature>
<feature type="binding site" evidence="1">
    <location>
        <position position="592"/>
    </location>
    <ligand>
        <name>Mg(2+)</name>
        <dbReference type="ChEBI" id="CHEBI:18420"/>
    </ligand>
</feature>
<feature type="sequence conflict" description="In Ref. 1; CAD29313." evidence="3" ref="1">
    <original>S</original>
    <variation>F</variation>
    <location>
        <position position="366"/>
    </location>
</feature>
<feature type="sequence conflict" description="In Ref. 1; CAD29313." evidence="3" ref="1">
    <original>N</original>
    <variation>T</variation>
    <location>
        <position position="370"/>
    </location>
</feature>
<feature type="sequence conflict" description="In Ref. 1; CAD29313." evidence="3" ref="1">
    <original>R</original>
    <variation>G</variation>
    <location>
        <position position="406"/>
    </location>
</feature>
<evidence type="ECO:0000250" key="1"/>
<evidence type="ECO:0000255" key="2"/>
<evidence type="ECO:0000305" key="3"/>
<reference key="1">
    <citation type="journal article" date="2002" name="Science">
        <title>A draft sequence of the rice genome (Oryza sativa L. ssp. japonica).</title>
        <authorList>
            <person name="Goff S.A."/>
            <person name="Ricke D."/>
            <person name="Lan T.H."/>
            <person name="Presting G."/>
            <person name="Wang R."/>
            <person name="Dunn M."/>
            <person name="Glazebrook J."/>
            <person name="Sessions A."/>
            <person name="Oeller P."/>
            <person name="Varma H."/>
            <person name="Hadley D."/>
            <person name="Hutchison D."/>
            <person name="Martin C."/>
            <person name="Katagiri F."/>
            <person name="Lange B.M."/>
            <person name="Moughamer T."/>
            <person name="Xia Y."/>
            <person name="Budworth P."/>
            <person name="Zhong J."/>
            <person name="Miguel T."/>
            <person name="Paszkowski U."/>
            <person name="Zhang S."/>
            <person name="Colbert M."/>
            <person name="Sun W.L."/>
            <person name="Chen L."/>
            <person name="Cooper B."/>
            <person name="Park S."/>
            <person name="Wood T.C."/>
            <person name="Mao L."/>
            <person name="Quail P."/>
            <person name="Wing R."/>
            <person name="Dean R."/>
            <person name="Yu Y."/>
            <person name="Zharkikh A."/>
            <person name="Shen R."/>
            <person name="Sahasrabudhe S."/>
            <person name="Thomas A."/>
            <person name="Cannings R."/>
            <person name="Gutin A."/>
            <person name="Pruss D."/>
            <person name="Reid J."/>
            <person name="Tavtigian S."/>
            <person name="Mitchell J."/>
            <person name="Eldredge G."/>
            <person name="Scholl T."/>
            <person name="Miller R.M."/>
            <person name="Bhatnagar S."/>
            <person name="Adey N."/>
            <person name="Rubano T."/>
            <person name="Tusneem N."/>
            <person name="Robinson R."/>
            <person name="Feldhaus J."/>
            <person name="Macalma T."/>
            <person name="Oliphant A."/>
            <person name="Briggs S."/>
        </authorList>
    </citation>
    <scope>NUCLEOTIDE SEQUENCE [LARGE SCALE GENOMIC DNA]</scope>
</reference>
<reference key="2">
    <citation type="journal article" date="2002" name="Nature">
        <title>Sequence and analysis of rice chromosome 4.</title>
        <authorList>
            <person name="Feng Q."/>
            <person name="Zhang Y."/>
            <person name="Hao P."/>
            <person name="Wang S."/>
            <person name="Fu G."/>
            <person name="Huang Y."/>
            <person name="Li Y."/>
            <person name="Zhu J."/>
            <person name="Liu Y."/>
            <person name="Hu X."/>
            <person name="Jia P."/>
            <person name="Zhang Y."/>
            <person name="Zhao Q."/>
            <person name="Ying K."/>
            <person name="Yu S."/>
            <person name="Tang Y."/>
            <person name="Weng Q."/>
            <person name="Zhang L."/>
            <person name="Lu Y."/>
            <person name="Mu J."/>
            <person name="Lu Y."/>
            <person name="Zhang L.S."/>
            <person name="Yu Z."/>
            <person name="Fan D."/>
            <person name="Liu X."/>
            <person name="Lu T."/>
            <person name="Li C."/>
            <person name="Wu Y."/>
            <person name="Sun T."/>
            <person name="Lei H."/>
            <person name="Li T."/>
            <person name="Hu H."/>
            <person name="Guan J."/>
            <person name="Wu M."/>
            <person name="Zhang R."/>
            <person name="Zhou B."/>
            <person name="Chen Z."/>
            <person name="Chen L."/>
            <person name="Jin Z."/>
            <person name="Wang R."/>
            <person name="Yin H."/>
            <person name="Cai Z."/>
            <person name="Ren S."/>
            <person name="Lv G."/>
            <person name="Gu W."/>
            <person name="Zhu G."/>
            <person name="Tu Y."/>
            <person name="Jia J."/>
            <person name="Zhang Y."/>
            <person name="Chen J."/>
            <person name="Kang H."/>
            <person name="Chen X."/>
            <person name="Shao C."/>
            <person name="Sun Y."/>
            <person name="Hu Q."/>
            <person name="Zhang X."/>
            <person name="Zhang W."/>
            <person name="Wang L."/>
            <person name="Ding C."/>
            <person name="Sheng H."/>
            <person name="Gu J."/>
            <person name="Chen S."/>
            <person name="Ni L."/>
            <person name="Zhu F."/>
            <person name="Chen W."/>
            <person name="Lan L."/>
            <person name="Lai Y."/>
            <person name="Cheng Z."/>
            <person name="Gu M."/>
            <person name="Jiang J."/>
            <person name="Li J."/>
            <person name="Hong G."/>
            <person name="Xue Y."/>
            <person name="Han B."/>
        </authorList>
    </citation>
    <scope>NUCLEOTIDE SEQUENCE [LARGE SCALE GENOMIC DNA]</scope>
    <source>
        <strain>cv. Nipponbare</strain>
    </source>
</reference>
<reference key="3">
    <citation type="journal article" date="2005" name="Nature">
        <title>The map-based sequence of the rice genome.</title>
        <authorList>
            <consortium name="International rice genome sequencing project (IRGSP)"/>
        </authorList>
    </citation>
    <scope>NUCLEOTIDE SEQUENCE [LARGE SCALE GENOMIC DNA]</scope>
    <source>
        <strain>cv. Nipponbare</strain>
    </source>
</reference>
<reference key="4">
    <citation type="journal article" date="2008" name="Nucleic Acids Res.">
        <title>The rice annotation project database (RAP-DB): 2008 update.</title>
        <authorList>
            <consortium name="The rice annotation project (RAP)"/>
        </authorList>
    </citation>
    <scope>GENOME REANNOTATION</scope>
    <source>
        <strain>cv. Nipponbare</strain>
    </source>
</reference>
<reference key="5">
    <citation type="journal article" date="2013" name="Rice">
        <title>Improvement of the Oryza sativa Nipponbare reference genome using next generation sequence and optical map data.</title>
        <authorList>
            <person name="Kawahara Y."/>
            <person name="de la Bastide M."/>
            <person name="Hamilton J.P."/>
            <person name="Kanamori H."/>
            <person name="McCombie W.R."/>
            <person name="Ouyang S."/>
            <person name="Schwartz D.C."/>
            <person name="Tanaka T."/>
            <person name="Wu J."/>
            <person name="Zhou S."/>
            <person name="Childs K.L."/>
            <person name="Davidson R.M."/>
            <person name="Lin H."/>
            <person name="Quesada-Ocampo L."/>
            <person name="Vaillancourt B."/>
            <person name="Sakai H."/>
            <person name="Lee S.S."/>
            <person name="Kim J."/>
            <person name="Numa H."/>
            <person name="Itoh T."/>
            <person name="Buell C.R."/>
            <person name="Matsumoto T."/>
        </authorList>
    </citation>
    <scope>GENOME REANNOTATION</scope>
    <source>
        <strain>cv. Nipponbare</strain>
    </source>
</reference>
<reference key="6">
    <citation type="journal article" date="2003" name="Science">
        <title>Collection, mapping, and annotation of over 28,000 cDNA clones from japonica rice.</title>
        <authorList>
            <consortium name="The rice full-length cDNA consortium"/>
        </authorList>
    </citation>
    <scope>NUCLEOTIDE SEQUENCE [LARGE SCALE MRNA]</scope>
    <source>
        <strain>cv. Nipponbare</strain>
    </source>
</reference>
<gene>
    <name type="ordered locus">Os04g0656100</name>
    <name type="ordered locus">LOC_Os04g56160</name>
    <name type="ORF">OSJNBa0071I13.11</name>
</gene>
<sequence length="951" mass="104819">MGGLEEIKNEAVDLENIPIEEVFEQLKCTREGLSSEEGNRRIEMFGPNKLEEKKESKILKFLGFMWNPLSWVMEMAAIMAIALANGGGKPPDWEDFVGIIVLLVINSTISFIEENNAGNAAAALMANLAPKTKVLRDGRWGEQEAAILVPGDIISIKLGDIVPADARLLEGDPLKIDQSALTGESLPVTKNPGDEVFSGSTCKQGEIEAVVIATGVHTFFGKAAHLVDSTNQVGHFQTVLTAIGNFCICSIAVGIVIEIIVMFPIQHRAYRSGIENLLVLLIGGIPIAMPTVLSVTMAIGSHKLSQQGAITKRMTAIEEMAGMDVLCSDKTGTLTLNKLSVDKNLVEVFTKGVDKDHVLLLAARASRTENQDAIDAAMVGMLADPKEARAGIREVHFLPFNPVDKRTALTYIDADGNWHRASKGAPEQILTLCNCKEDVKRKVHAVIDKYAERGLRSLAVARQEVPEKSKESAGGPWQFVGLLPLFDPPRHDSAETIRKALHLGVNVKMITGDQLAIGKETGRRLGMGTNMYPSSALLGQNKDASLEALPVDELIEKADGFAGVFPEHKYEIVKRLQEKKHIVGMTGDGVNDAPALKKADIGIAVADATDAARSASDIVLTEPGLSVIISAVLTSRCIFQRMKNYTIYAVSITIRIVLGFLLIALIWKYDFSPFMVLIIAILNDGTIMTISKDRVKPSPLPDSWKLKEIFATGIVLGSYLALMTVIFFWAMHKTDFFTDKFGVRSIRNSEHEMMSALYLQVSIVSQALIFVTRSRSWSFIERPGLLLVTAFMLAQLVATFLAVYANWGFARIKGIGWGWAGVIWLYSIVFYFPLDIFKFFIRFVLSGRAWDNLLENKIAFTTKKDYGREEREAQWATAQRTLHGLQPPEVASNTLFNDKSSYRELSEIAEQAKRRAEIARLRELNTLKGHVESVVKLKGLDIDTIQQNYTV</sequence>
<proteinExistence type="evidence at transcript level"/>
<accession>Q7XPY2</accession>
<accession>B7EQF8</accession>
<accession>Q0J9F5</accession>
<accession>Q8RW28</accession>
<keyword id="KW-0067">ATP-binding</keyword>
<keyword id="KW-1003">Cell membrane</keyword>
<keyword id="KW-0375">Hydrogen ion transport</keyword>
<keyword id="KW-0406">Ion transport</keyword>
<keyword id="KW-0460">Magnesium</keyword>
<keyword id="KW-0472">Membrane</keyword>
<keyword id="KW-0479">Metal-binding</keyword>
<keyword id="KW-0547">Nucleotide-binding</keyword>
<keyword id="KW-0597">Phosphoprotein</keyword>
<keyword id="KW-1185">Reference proteome</keyword>
<keyword id="KW-1278">Translocase</keyword>
<keyword id="KW-0812">Transmembrane</keyword>
<keyword id="KW-1133">Transmembrane helix</keyword>
<keyword id="KW-0813">Transport</keyword>